<name>OBG_BORBU</name>
<dbReference type="EC" id="3.6.5.-" evidence="1"/>
<dbReference type="EMBL" id="AE000783">
    <property type="protein sequence ID" value="AAC67127.1"/>
    <property type="molecule type" value="Genomic_DNA"/>
</dbReference>
<dbReference type="PIR" id="D70197">
    <property type="entry name" value="D70197"/>
</dbReference>
<dbReference type="RefSeq" id="NP_212915.1">
    <property type="nucleotide sequence ID" value="NC_001318.1"/>
</dbReference>
<dbReference type="SMR" id="O51722"/>
<dbReference type="STRING" id="224326.BB_0781"/>
<dbReference type="PaxDb" id="224326-BB_0781"/>
<dbReference type="EnsemblBacteria" id="AAC67127">
    <property type="protein sequence ID" value="AAC67127"/>
    <property type="gene ID" value="BB_0781"/>
</dbReference>
<dbReference type="KEGG" id="bbu:BB_0781"/>
<dbReference type="PATRIC" id="fig|224326.49.peg.1173"/>
<dbReference type="HOGENOM" id="CLU_011747_2_0_12"/>
<dbReference type="OrthoDB" id="9807318at2"/>
<dbReference type="Proteomes" id="UP000001807">
    <property type="component" value="Chromosome"/>
</dbReference>
<dbReference type="GO" id="GO:0005737">
    <property type="term" value="C:cytoplasm"/>
    <property type="evidence" value="ECO:0007669"/>
    <property type="project" value="UniProtKB-SubCell"/>
</dbReference>
<dbReference type="GO" id="GO:0005525">
    <property type="term" value="F:GTP binding"/>
    <property type="evidence" value="ECO:0007669"/>
    <property type="project" value="UniProtKB-UniRule"/>
</dbReference>
<dbReference type="GO" id="GO:0003924">
    <property type="term" value="F:GTPase activity"/>
    <property type="evidence" value="ECO:0007669"/>
    <property type="project" value="UniProtKB-UniRule"/>
</dbReference>
<dbReference type="GO" id="GO:0000287">
    <property type="term" value="F:magnesium ion binding"/>
    <property type="evidence" value="ECO:0007669"/>
    <property type="project" value="InterPro"/>
</dbReference>
<dbReference type="GO" id="GO:0042254">
    <property type="term" value="P:ribosome biogenesis"/>
    <property type="evidence" value="ECO:0007669"/>
    <property type="project" value="UniProtKB-UniRule"/>
</dbReference>
<dbReference type="CDD" id="cd01898">
    <property type="entry name" value="Obg"/>
    <property type="match status" value="1"/>
</dbReference>
<dbReference type="FunFam" id="2.70.210.12:FF:000001">
    <property type="entry name" value="GTPase Obg"/>
    <property type="match status" value="1"/>
</dbReference>
<dbReference type="Gene3D" id="2.70.210.12">
    <property type="entry name" value="GTP1/OBG domain"/>
    <property type="match status" value="1"/>
</dbReference>
<dbReference type="Gene3D" id="3.40.50.300">
    <property type="entry name" value="P-loop containing nucleotide triphosphate hydrolases"/>
    <property type="match status" value="1"/>
</dbReference>
<dbReference type="HAMAP" id="MF_01454">
    <property type="entry name" value="GTPase_Obg"/>
    <property type="match status" value="1"/>
</dbReference>
<dbReference type="InterPro" id="IPR031167">
    <property type="entry name" value="G_OBG"/>
</dbReference>
<dbReference type="InterPro" id="IPR006073">
    <property type="entry name" value="GTP-bd"/>
</dbReference>
<dbReference type="InterPro" id="IPR014100">
    <property type="entry name" value="GTP-bd_Obg/CgtA"/>
</dbReference>
<dbReference type="InterPro" id="IPR006074">
    <property type="entry name" value="GTP1-OBG_CS"/>
</dbReference>
<dbReference type="InterPro" id="IPR006169">
    <property type="entry name" value="GTP1_OBG_dom"/>
</dbReference>
<dbReference type="InterPro" id="IPR036726">
    <property type="entry name" value="GTP1_OBG_dom_sf"/>
</dbReference>
<dbReference type="InterPro" id="IPR045086">
    <property type="entry name" value="OBG_GTPase"/>
</dbReference>
<dbReference type="InterPro" id="IPR027417">
    <property type="entry name" value="P-loop_NTPase"/>
</dbReference>
<dbReference type="InterPro" id="IPR005225">
    <property type="entry name" value="Small_GTP-bd"/>
</dbReference>
<dbReference type="NCBIfam" id="TIGR02729">
    <property type="entry name" value="Obg_CgtA"/>
    <property type="match status" value="1"/>
</dbReference>
<dbReference type="NCBIfam" id="NF008956">
    <property type="entry name" value="PRK12299.1"/>
    <property type="match status" value="1"/>
</dbReference>
<dbReference type="NCBIfam" id="TIGR00231">
    <property type="entry name" value="small_GTP"/>
    <property type="match status" value="1"/>
</dbReference>
<dbReference type="PANTHER" id="PTHR11702">
    <property type="entry name" value="DEVELOPMENTALLY REGULATED GTP-BINDING PROTEIN-RELATED"/>
    <property type="match status" value="1"/>
</dbReference>
<dbReference type="PANTHER" id="PTHR11702:SF31">
    <property type="entry name" value="MITOCHONDRIAL RIBOSOME-ASSOCIATED GTPASE 2"/>
    <property type="match status" value="1"/>
</dbReference>
<dbReference type="Pfam" id="PF01018">
    <property type="entry name" value="GTP1_OBG"/>
    <property type="match status" value="1"/>
</dbReference>
<dbReference type="Pfam" id="PF01926">
    <property type="entry name" value="MMR_HSR1"/>
    <property type="match status" value="1"/>
</dbReference>
<dbReference type="PIRSF" id="PIRSF002401">
    <property type="entry name" value="GTP_bd_Obg/CgtA"/>
    <property type="match status" value="1"/>
</dbReference>
<dbReference type="PRINTS" id="PR00326">
    <property type="entry name" value="GTP1OBG"/>
</dbReference>
<dbReference type="SUPFAM" id="SSF82051">
    <property type="entry name" value="Obg GTP-binding protein N-terminal domain"/>
    <property type="match status" value="1"/>
</dbReference>
<dbReference type="SUPFAM" id="SSF52540">
    <property type="entry name" value="P-loop containing nucleoside triphosphate hydrolases"/>
    <property type="match status" value="1"/>
</dbReference>
<dbReference type="PROSITE" id="PS51710">
    <property type="entry name" value="G_OBG"/>
    <property type="match status" value="1"/>
</dbReference>
<dbReference type="PROSITE" id="PS00905">
    <property type="entry name" value="GTP1_OBG"/>
    <property type="match status" value="1"/>
</dbReference>
<dbReference type="PROSITE" id="PS51883">
    <property type="entry name" value="OBG"/>
    <property type="match status" value="1"/>
</dbReference>
<accession>O51722</accession>
<gene>
    <name evidence="1" type="primary">obg</name>
    <name type="ordered locus">BB_0781</name>
</gene>
<feature type="chain" id="PRO_0000385754" description="GTPase Obg">
    <location>
        <begin position="1"/>
        <end position="328"/>
    </location>
</feature>
<feature type="domain" description="Obg" evidence="2">
    <location>
        <begin position="2"/>
        <end position="160"/>
    </location>
</feature>
<feature type="domain" description="OBG-type G" evidence="1">
    <location>
        <begin position="161"/>
        <end position="326"/>
    </location>
</feature>
<feature type="binding site" evidence="1">
    <location>
        <begin position="167"/>
        <end position="174"/>
    </location>
    <ligand>
        <name>GTP</name>
        <dbReference type="ChEBI" id="CHEBI:37565"/>
    </ligand>
</feature>
<feature type="binding site" evidence="1">
    <location>
        <position position="174"/>
    </location>
    <ligand>
        <name>Mg(2+)</name>
        <dbReference type="ChEBI" id="CHEBI:18420"/>
    </ligand>
</feature>
<feature type="binding site" evidence="1">
    <location>
        <begin position="192"/>
        <end position="196"/>
    </location>
    <ligand>
        <name>GTP</name>
        <dbReference type="ChEBI" id="CHEBI:37565"/>
    </ligand>
</feature>
<feature type="binding site" evidence="1">
    <location>
        <position position="194"/>
    </location>
    <ligand>
        <name>Mg(2+)</name>
        <dbReference type="ChEBI" id="CHEBI:18420"/>
    </ligand>
</feature>
<feature type="binding site" evidence="1">
    <location>
        <begin position="213"/>
        <end position="216"/>
    </location>
    <ligand>
        <name>GTP</name>
        <dbReference type="ChEBI" id="CHEBI:37565"/>
    </ligand>
</feature>
<feature type="binding site" evidence="1">
    <location>
        <begin position="280"/>
        <end position="283"/>
    </location>
    <ligand>
        <name>GTP</name>
        <dbReference type="ChEBI" id="CHEBI:37565"/>
    </ligand>
</feature>
<feature type="binding site" evidence="1">
    <location>
        <begin position="307"/>
        <end position="309"/>
    </location>
    <ligand>
        <name>GTP</name>
        <dbReference type="ChEBI" id="CHEBI:37565"/>
    </ligand>
</feature>
<sequence length="328" mass="35735">MYNFKDSVNITVVSGNGGSGCVSFLREKFNAKGGPDGGNGGSGGSVIFKVRENLSTLSFYKNGHVLCAENGKPGMGFKRSGANGKDLTLFVPPNTEVYNENDGTLLYRLKNLNDEFVVLKGGRGGLGNWNFKTSVRRVPRFAQPGESGNSLSVRLELFLVADIGLVGLPNAGKSSLLNRITSAKSRVANYPFTTKIPHLGMLRRSYDDLIIADIPGIIKGASFGVGLGTKFLKHIAKTKILALVIDISEANFLESYNILLNELKSYSHKLFNKKKIIIANKLDLDGSEKNFDCLIKALGKEKVVGISIYENRGIDELIKEFFILAKTF</sequence>
<evidence type="ECO:0000255" key="1">
    <source>
        <dbReference type="HAMAP-Rule" id="MF_01454"/>
    </source>
</evidence>
<evidence type="ECO:0000255" key="2">
    <source>
        <dbReference type="PROSITE-ProRule" id="PRU01231"/>
    </source>
</evidence>
<keyword id="KW-0963">Cytoplasm</keyword>
<keyword id="KW-0342">GTP-binding</keyword>
<keyword id="KW-0378">Hydrolase</keyword>
<keyword id="KW-0460">Magnesium</keyword>
<keyword id="KW-0479">Metal-binding</keyword>
<keyword id="KW-0547">Nucleotide-binding</keyword>
<keyword id="KW-1185">Reference proteome</keyword>
<proteinExistence type="inferred from homology"/>
<comment type="function">
    <text evidence="1">An essential GTPase which binds GTP, GDP and possibly (p)ppGpp with moderate affinity, with high nucleotide exchange rates and a fairly low GTP hydrolysis rate. Plays a role in control of the cell cycle, stress response, ribosome biogenesis and in those bacteria that undergo differentiation, in morphogenesis control.</text>
</comment>
<comment type="cofactor">
    <cofactor evidence="1">
        <name>Mg(2+)</name>
        <dbReference type="ChEBI" id="CHEBI:18420"/>
    </cofactor>
</comment>
<comment type="subunit">
    <text evidence="1">Monomer.</text>
</comment>
<comment type="subcellular location">
    <subcellularLocation>
        <location evidence="1">Cytoplasm</location>
    </subcellularLocation>
</comment>
<comment type="similarity">
    <text evidence="1">Belongs to the TRAFAC class OBG-HflX-like GTPase superfamily. OBG GTPase family.</text>
</comment>
<reference key="1">
    <citation type="journal article" date="1997" name="Nature">
        <title>Genomic sequence of a Lyme disease spirochaete, Borrelia burgdorferi.</title>
        <authorList>
            <person name="Fraser C.M."/>
            <person name="Casjens S."/>
            <person name="Huang W.M."/>
            <person name="Sutton G.G."/>
            <person name="Clayton R.A."/>
            <person name="Lathigra R."/>
            <person name="White O."/>
            <person name="Ketchum K.A."/>
            <person name="Dodson R.J."/>
            <person name="Hickey E.K."/>
            <person name="Gwinn M.L."/>
            <person name="Dougherty B.A."/>
            <person name="Tomb J.-F."/>
            <person name="Fleischmann R.D."/>
            <person name="Richardson D.L."/>
            <person name="Peterson J.D."/>
            <person name="Kerlavage A.R."/>
            <person name="Quackenbush J."/>
            <person name="Salzberg S.L."/>
            <person name="Hanson M."/>
            <person name="van Vugt R."/>
            <person name="Palmer N."/>
            <person name="Adams M.D."/>
            <person name="Gocayne J.D."/>
            <person name="Weidman J.F."/>
            <person name="Utterback T.R."/>
            <person name="Watthey L."/>
            <person name="McDonald L.A."/>
            <person name="Artiach P."/>
            <person name="Bowman C."/>
            <person name="Garland S.A."/>
            <person name="Fujii C."/>
            <person name="Cotton M.D."/>
            <person name="Horst K."/>
            <person name="Roberts K.M."/>
            <person name="Hatch B."/>
            <person name="Smith H.O."/>
            <person name="Venter J.C."/>
        </authorList>
    </citation>
    <scope>NUCLEOTIDE SEQUENCE [LARGE SCALE GENOMIC DNA]</scope>
    <source>
        <strain>ATCC 35210 / DSM 4680 / CIP 102532 / B31</strain>
    </source>
</reference>
<protein>
    <recommendedName>
        <fullName evidence="1">GTPase Obg</fullName>
        <ecNumber evidence="1">3.6.5.-</ecNumber>
    </recommendedName>
    <alternativeName>
        <fullName evidence="1">GTP-binding protein Obg</fullName>
    </alternativeName>
</protein>
<organism>
    <name type="scientific">Borreliella burgdorferi (strain ATCC 35210 / DSM 4680 / CIP 102532 / B31)</name>
    <name type="common">Borrelia burgdorferi</name>
    <dbReference type="NCBI Taxonomy" id="224326"/>
    <lineage>
        <taxon>Bacteria</taxon>
        <taxon>Pseudomonadati</taxon>
        <taxon>Spirochaetota</taxon>
        <taxon>Spirochaetia</taxon>
        <taxon>Spirochaetales</taxon>
        <taxon>Borreliaceae</taxon>
        <taxon>Borreliella</taxon>
    </lineage>
</organism>